<evidence type="ECO:0000255" key="1"/>
<evidence type="ECO:0000255" key="2">
    <source>
        <dbReference type="HAMAP-Rule" id="MF_01710"/>
    </source>
</evidence>
<evidence type="ECO:0000305" key="3"/>
<sequence>MNQNQLISVEDIVFRYRKDAERRALDGVSLQVYEGEWLAIVGHNGSGKSTLARALNGLILPESGDIEVAGIQLTEESVWEVRKKIGMVFQNPDNQFVGTTVRDDVAFGLENNGVPREEMIERVDWAVKQVNMQDFLDQEPHHLSGGQKQRVAIAGVIAARPDIIILDEATSMLDPIGREEVLETVRHLKEQGMATVISITHDLNEAAKADRIIVMNGGKKYAEGPPEEIFKLNKELVRIGLDLPFSFQLSQLLRENGLALEENHLTQEGLVKELWTLQSKM</sequence>
<accession>P40735</accession>
<organism>
    <name type="scientific">Bacillus subtilis (strain 168)</name>
    <dbReference type="NCBI Taxonomy" id="224308"/>
    <lineage>
        <taxon>Bacteria</taxon>
        <taxon>Bacillati</taxon>
        <taxon>Bacillota</taxon>
        <taxon>Bacilli</taxon>
        <taxon>Bacillales</taxon>
        <taxon>Bacillaceae</taxon>
        <taxon>Bacillus</taxon>
    </lineage>
</organism>
<dbReference type="EC" id="7.-.-.-" evidence="2"/>
<dbReference type="EMBL" id="D64126">
    <property type="protein sequence ID" value="BAA10983.1"/>
    <property type="molecule type" value="Genomic_DNA"/>
</dbReference>
<dbReference type="EMBL" id="AL009126">
    <property type="protein sequence ID" value="CAB11921.2"/>
    <property type="molecule type" value="Genomic_DNA"/>
</dbReference>
<dbReference type="EMBL" id="M26414">
    <property type="protein sequence ID" value="AAA22219.1"/>
    <property type="molecule type" value="Genomic_DNA"/>
</dbReference>
<dbReference type="PIR" id="E69751">
    <property type="entry name" value="E69751"/>
</dbReference>
<dbReference type="RefSeq" id="NP_388026.2">
    <property type="nucleotide sequence ID" value="NC_000964.3"/>
</dbReference>
<dbReference type="RefSeq" id="WP_004399689.1">
    <property type="nucleotide sequence ID" value="NZ_OZ025638.1"/>
</dbReference>
<dbReference type="SMR" id="P40735"/>
<dbReference type="FunCoup" id="P40735">
    <property type="interactions" value="420"/>
</dbReference>
<dbReference type="STRING" id="224308.BSU01450"/>
<dbReference type="PaxDb" id="224308-BSU01450"/>
<dbReference type="EnsemblBacteria" id="CAB11921">
    <property type="protein sequence ID" value="CAB11921"/>
    <property type="gene ID" value="BSU_01450"/>
</dbReference>
<dbReference type="GeneID" id="938925"/>
<dbReference type="KEGG" id="bsu:BSU01450"/>
<dbReference type="PATRIC" id="fig|224308.179.peg.149"/>
<dbReference type="eggNOG" id="COG1122">
    <property type="taxonomic scope" value="Bacteria"/>
</dbReference>
<dbReference type="InParanoid" id="P40735"/>
<dbReference type="OrthoDB" id="9784332at2"/>
<dbReference type="PhylomeDB" id="P40735"/>
<dbReference type="BioCyc" id="BSUB:BSU01450-MONOMER"/>
<dbReference type="Proteomes" id="UP000001570">
    <property type="component" value="Chromosome"/>
</dbReference>
<dbReference type="GO" id="GO:0043190">
    <property type="term" value="C:ATP-binding cassette (ABC) transporter complex"/>
    <property type="evidence" value="ECO:0000318"/>
    <property type="project" value="GO_Central"/>
</dbReference>
<dbReference type="GO" id="GO:0005524">
    <property type="term" value="F:ATP binding"/>
    <property type="evidence" value="ECO:0000318"/>
    <property type="project" value="GO_Central"/>
</dbReference>
<dbReference type="GO" id="GO:0016887">
    <property type="term" value="F:ATP hydrolysis activity"/>
    <property type="evidence" value="ECO:0007669"/>
    <property type="project" value="InterPro"/>
</dbReference>
<dbReference type="GO" id="GO:0042626">
    <property type="term" value="F:ATPase-coupled transmembrane transporter activity"/>
    <property type="evidence" value="ECO:0000318"/>
    <property type="project" value="GO_Central"/>
</dbReference>
<dbReference type="CDD" id="cd03225">
    <property type="entry name" value="ABC_cobalt_CbiO_domain1"/>
    <property type="match status" value="1"/>
</dbReference>
<dbReference type="FunFam" id="3.40.50.300:FF:000224">
    <property type="entry name" value="Energy-coupling factor transporter ATP-binding protein EcfA"/>
    <property type="match status" value="1"/>
</dbReference>
<dbReference type="Gene3D" id="3.40.50.300">
    <property type="entry name" value="P-loop containing nucleotide triphosphate hydrolases"/>
    <property type="match status" value="1"/>
</dbReference>
<dbReference type="InterPro" id="IPR003593">
    <property type="entry name" value="AAA+_ATPase"/>
</dbReference>
<dbReference type="InterPro" id="IPR003439">
    <property type="entry name" value="ABC_transporter-like_ATP-bd"/>
</dbReference>
<dbReference type="InterPro" id="IPR017871">
    <property type="entry name" value="ABC_transporter-like_CS"/>
</dbReference>
<dbReference type="InterPro" id="IPR015856">
    <property type="entry name" value="ABC_transpr_CbiO/EcfA_su"/>
</dbReference>
<dbReference type="InterPro" id="IPR050095">
    <property type="entry name" value="ECF_ABC_transporter_ATP-bd"/>
</dbReference>
<dbReference type="InterPro" id="IPR030947">
    <property type="entry name" value="EcfA_1"/>
</dbReference>
<dbReference type="InterPro" id="IPR027417">
    <property type="entry name" value="P-loop_NTPase"/>
</dbReference>
<dbReference type="NCBIfam" id="TIGR04520">
    <property type="entry name" value="ECF_ATPase_1"/>
    <property type="match status" value="1"/>
</dbReference>
<dbReference type="NCBIfam" id="NF010156">
    <property type="entry name" value="PRK13635.1"/>
    <property type="match status" value="1"/>
</dbReference>
<dbReference type="NCBIfam" id="NF010167">
    <property type="entry name" value="PRK13648.1"/>
    <property type="match status" value="1"/>
</dbReference>
<dbReference type="PANTHER" id="PTHR43553:SF24">
    <property type="entry name" value="ENERGY-COUPLING FACTOR TRANSPORTER ATP-BINDING PROTEIN ECFA1"/>
    <property type="match status" value="1"/>
</dbReference>
<dbReference type="PANTHER" id="PTHR43553">
    <property type="entry name" value="HEAVY METAL TRANSPORTER"/>
    <property type="match status" value="1"/>
</dbReference>
<dbReference type="Pfam" id="PF00005">
    <property type="entry name" value="ABC_tran"/>
    <property type="match status" value="1"/>
</dbReference>
<dbReference type="SMART" id="SM00382">
    <property type="entry name" value="AAA"/>
    <property type="match status" value="1"/>
</dbReference>
<dbReference type="SUPFAM" id="SSF52540">
    <property type="entry name" value="P-loop containing nucleoside triphosphate hydrolases"/>
    <property type="match status" value="1"/>
</dbReference>
<dbReference type="PROSITE" id="PS00211">
    <property type="entry name" value="ABC_TRANSPORTER_1"/>
    <property type="match status" value="1"/>
</dbReference>
<dbReference type="PROSITE" id="PS50893">
    <property type="entry name" value="ABC_TRANSPORTER_2"/>
    <property type="match status" value="1"/>
</dbReference>
<dbReference type="PROSITE" id="PS51246">
    <property type="entry name" value="CBIO"/>
    <property type="match status" value="1"/>
</dbReference>
<reference key="1">
    <citation type="journal article" date="1996" name="Microbiology">
        <title>Sequence analysis of a 50 kb region between spo0H and rrnH on the Bacillus subtilis chromosome.</title>
        <authorList>
            <person name="Yasumoto K."/>
            <person name="Liu H."/>
            <person name="Jeong S.M."/>
            <person name="Ohashi Y."/>
            <person name="Kakinuma S."/>
            <person name="Tanaka K."/>
            <person name="Kawamura F."/>
            <person name="Yoshikawa H."/>
            <person name="Takahashi H."/>
        </authorList>
    </citation>
    <scope>NUCLEOTIDE SEQUENCE [GENOMIC DNA]</scope>
    <source>
        <strain>168</strain>
    </source>
</reference>
<reference key="2">
    <citation type="journal article" date="1997" name="Nature">
        <title>The complete genome sequence of the Gram-positive bacterium Bacillus subtilis.</title>
        <authorList>
            <person name="Kunst F."/>
            <person name="Ogasawara N."/>
            <person name="Moszer I."/>
            <person name="Albertini A.M."/>
            <person name="Alloni G."/>
            <person name="Azevedo V."/>
            <person name="Bertero M.G."/>
            <person name="Bessieres P."/>
            <person name="Bolotin A."/>
            <person name="Borchert S."/>
            <person name="Borriss R."/>
            <person name="Boursier L."/>
            <person name="Brans A."/>
            <person name="Braun M."/>
            <person name="Brignell S.C."/>
            <person name="Bron S."/>
            <person name="Brouillet S."/>
            <person name="Bruschi C.V."/>
            <person name="Caldwell B."/>
            <person name="Capuano V."/>
            <person name="Carter N.M."/>
            <person name="Choi S.-K."/>
            <person name="Codani J.-J."/>
            <person name="Connerton I.F."/>
            <person name="Cummings N.J."/>
            <person name="Daniel R.A."/>
            <person name="Denizot F."/>
            <person name="Devine K.M."/>
            <person name="Duesterhoeft A."/>
            <person name="Ehrlich S.D."/>
            <person name="Emmerson P.T."/>
            <person name="Entian K.-D."/>
            <person name="Errington J."/>
            <person name="Fabret C."/>
            <person name="Ferrari E."/>
            <person name="Foulger D."/>
            <person name="Fritz C."/>
            <person name="Fujita M."/>
            <person name="Fujita Y."/>
            <person name="Fuma S."/>
            <person name="Galizzi A."/>
            <person name="Galleron N."/>
            <person name="Ghim S.-Y."/>
            <person name="Glaser P."/>
            <person name="Goffeau A."/>
            <person name="Golightly E.J."/>
            <person name="Grandi G."/>
            <person name="Guiseppi G."/>
            <person name="Guy B.J."/>
            <person name="Haga K."/>
            <person name="Haiech J."/>
            <person name="Harwood C.R."/>
            <person name="Henaut A."/>
            <person name="Hilbert H."/>
            <person name="Holsappel S."/>
            <person name="Hosono S."/>
            <person name="Hullo M.-F."/>
            <person name="Itaya M."/>
            <person name="Jones L.-M."/>
            <person name="Joris B."/>
            <person name="Karamata D."/>
            <person name="Kasahara Y."/>
            <person name="Klaerr-Blanchard M."/>
            <person name="Klein C."/>
            <person name="Kobayashi Y."/>
            <person name="Koetter P."/>
            <person name="Koningstein G."/>
            <person name="Krogh S."/>
            <person name="Kumano M."/>
            <person name="Kurita K."/>
            <person name="Lapidus A."/>
            <person name="Lardinois S."/>
            <person name="Lauber J."/>
            <person name="Lazarevic V."/>
            <person name="Lee S.-M."/>
            <person name="Levine A."/>
            <person name="Liu H."/>
            <person name="Masuda S."/>
            <person name="Mauel C."/>
            <person name="Medigue C."/>
            <person name="Medina N."/>
            <person name="Mellado R.P."/>
            <person name="Mizuno M."/>
            <person name="Moestl D."/>
            <person name="Nakai S."/>
            <person name="Noback M."/>
            <person name="Noone D."/>
            <person name="O'Reilly M."/>
            <person name="Ogawa K."/>
            <person name="Ogiwara A."/>
            <person name="Oudega B."/>
            <person name="Park S.-H."/>
            <person name="Parro V."/>
            <person name="Pohl T.M."/>
            <person name="Portetelle D."/>
            <person name="Porwollik S."/>
            <person name="Prescott A.M."/>
            <person name="Presecan E."/>
            <person name="Pujic P."/>
            <person name="Purnelle B."/>
            <person name="Rapoport G."/>
            <person name="Rey M."/>
            <person name="Reynolds S."/>
            <person name="Rieger M."/>
            <person name="Rivolta C."/>
            <person name="Rocha E."/>
            <person name="Roche B."/>
            <person name="Rose M."/>
            <person name="Sadaie Y."/>
            <person name="Sato T."/>
            <person name="Scanlan E."/>
            <person name="Schleich S."/>
            <person name="Schroeter R."/>
            <person name="Scoffone F."/>
            <person name="Sekiguchi J."/>
            <person name="Sekowska A."/>
            <person name="Seror S.J."/>
            <person name="Serror P."/>
            <person name="Shin B.-S."/>
            <person name="Soldo B."/>
            <person name="Sorokin A."/>
            <person name="Tacconi E."/>
            <person name="Takagi T."/>
            <person name="Takahashi H."/>
            <person name="Takemaru K."/>
            <person name="Takeuchi M."/>
            <person name="Tamakoshi A."/>
            <person name="Tanaka T."/>
            <person name="Terpstra P."/>
            <person name="Tognoni A."/>
            <person name="Tosato V."/>
            <person name="Uchiyama S."/>
            <person name="Vandenbol M."/>
            <person name="Vannier F."/>
            <person name="Vassarotti A."/>
            <person name="Viari A."/>
            <person name="Wambutt R."/>
            <person name="Wedler E."/>
            <person name="Wedler H."/>
            <person name="Weitzenegger T."/>
            <person name="Winters P."/>
            <person name="Wipat A."/>
            <person name="Yamamoto H."/>
            <person name="Yamane K."/>
            <person name="Yasumoto K."/>
            <person name="Yata K."/>
            <person name="Yoshida K."/>
            <person name="Yoshikawa H.-F."/>
            <person name="Zumstein E."/>
            <person name="Yoshikawa H."/>
            <person name="Danchin A."/>
        </authorList>
    </citation>
    <scope>NUCLEOTIDE SEQUENCE [LARGE SCALE GENOMIC DNA]</scope>
    <source>
        <strain>168</strain>
    </source>
</reference>
<reference key="3">
    <citation type="journal article" date="2009" name="Microbiology">
        <title>From a consortium sequence to a unified sequence: the Bacillus subtilis 168 reference genome a decade later.</title>
        <authorList>
            <person name="Barbe V."/>
            <person name="Cruveiller S."/>
            <person name="Kunst F."/>
            <person name="Lenoble P."/>
            <person name="Meurice G."/>
            <person name="Sekowska A."/>
            <person name="Vallenet D."/>
            <person name="Wang T."/>
            <person name="Moszer I."/>
            <person name="Medigue C."/>
            <person name="Danchin A."/>
        </authorList>
    </citation>
    <scope>SEQUENCE REVISION TO 97; 235 AND 279</scope>
</reference>
<reference key="4">
    <citation type="journal article" date="1989" name="J. Bacteriol.">
        <title>Gene encoding the alpha core subunit of Bacillus subtilis RNA polymerase is cotranscribed with the genes for initiation factor 1 and ribosomal proteins B, S13, S11, and L17.</title>
        <authorList>
            <person name="Boylan S.A."/>
            <person name="Suh J.-W."/>
            <person name="Thomas S.M."/>
            <person name="Price C.W."/>
        </authorList>
    </citation>
    <scope>NUCLEOTIDE SEQUENCE [GENOMIC DNA] OF 1-31</scope>
</reference>
<feature type="chain" id="PRO_0000091986" description="Energy-coupling factor transporter ATP-binding protein EcfA1">
    <location>
        <begin position="1"/>
        <end position="281"/>
    </location>
</feature>
<feature type="domain" description="ABC transporter" evidence="2">
    <location>
        <begin position="7"/>
        <end position="242"/>
    </location>
</feature>
<feature type="active site" description="Proton acceptor" evidence="1">
    <location>
        <position position="168"/>
    </location>
</feature>
<feature type="binding site" evidence="2">
    <location>
        <begin position="42"/>
        <end position="49"/>
    </location>
    <ligand>
        <name>ATP</name>
        <dbReference type="ChEBI" id="CHEBI:30616"/>
    </ligand>
</feature>
<feature type="sequence conflict" description="In Ref. 1; BAA10983." evidence="3" ref="1">
    <original>V</original>
    <variation>F</variation>
    <location>
        <position position="97"/>
    </location>
</feature>
<feature type="sequence conflict" description="In Ref. 1; BAA10983." evidence="3" ref="1">
    <original>E</original>
    <variation>G</variation>
    <location>
        <position position="235"/>
    </location>
</feature>
<feature type="sequence conflict" description="In Ref. 1; BAA10983." evidence="3" ref="1">
    <original>S</original>
    <variation>L</variation>
    <location>
        <position position="279"/>
    </location>
</feature>
<comment type="function">
    <text evidence="2">ATP-binding (A) component of a common energy-coupling factor (ECF) ABC-transporter complex. Unlike classic ABC transporters this ECF transporter provides the energy necessary to transport a number of different substrates.</text>
</comment>
<comment type="subunit">
    <text evidence="2">Forms a stable energy-coupling factor (ECF) transporter complex composed of 2 membrane-embedded substrate-binding proteins (S component), 2 ATP-binding proteins (A component) and 2 transmembrane proteins (T component).</text>
</comment>
<comment type="subcellular location">
    <subcellularLocation>
        <location evidence="2">Cell membrane</location>
        <topology evidence="2">Peripheral membrane protein</topology>
    </subcellularLocation>
</comment>
<comment type="similarity">
    <text evidence="2">Belongs to the ABC transporter superfamily. Energy-coupling factor EcfA family.</text>
</comment>
<name>ECFA1_BACSU</name>
<gene>
    <name evidence="2" type="primary">ecfA</name>
    <name type="synonym">cbiO1</name>
    <name type="synonym">ybaD</name>
    <name type="synonym">ybxA</name>
    <name type="ordered locus">BSU01450</name>
</gene>
<proteinExistence type="inferred from homology"/>
<protein>
    <recommendedName>
        <fullName evidence="2">Energy-coupling factor transporter ATP-binding protein EcfA1</fullName>
        <shortName evidence="2">ECF transporter A component EcfA</shortName>
        <ecNumber evidence="2">7.-.-.-</ecNumber>
    </recommendedName>
</protein>
<keyword id="KW-0067">ATP-binding</keyword>
<keyword id="KW-1003">Cell membrane</keyword>
<keyword id="KW-0472">Membrane</keyword>
<keyword id="KW-0547">Nucleotide-binding</keyword>
<keyword id="KW-1185">Reference proteome</keyword>
<keyword id="KW-1278">Translocase</keyword>
<keyword id="KW-0813">Transport</keyword>